<dbReference type="EMBL" id="CP001032">
    <property type="protein sequence ID" value="ACB77060.1"/>
    <property type="molecule type" value="Genomic_DNA"/>
</dbReference>
<dbReference type="RefSeq" id="WP_012376589.1">
    <property type="nucleotide sequence ID" value="NC_010571.1"/>
</dbReference>
<dbReference type="SMR" id="B1ZYG2"/>
<dbReference type="STRING" id="452637.Oter_3785"/>
<dbReference type="KEGG" id="ote:Oter_3785"/>
<dbReference type="eggNOG" id="COG0227">
    <property type="taxonomic scope" value="Bacteria"/>
</dbReference>
<dbReference type="HOGENOM" id="CLU_064548_6_0_0"/>
<dbReference type="OrthoDB" id="9801582at2"/>
<dbReference type="Proteomes" id="UP000007013">
    <property type="component" value="Chromosome"/>
</dbReference>
<dbReference type="GO" id="GO:1990904">
    <property type="term" value="C:ribonucleoprotein complex"/>
    <property type="evidence" value="ECO:0007669"/>
    <property type="project" value="UniProtKB-KW"/>
</dbReference>
<dbReference type="GO" id="GO:0005840">
    <property type="term" value="C:ribosome"/>
    <property type="evidence" value="ECO:0007669"/>
    <property type="project" value="UniProtKB-KW"/>
</dbReference>
<dbReference type="GO" id="GO:0003735">
    <property type="term" value="F:structural constituent of ribosome"/>
    <property type="evidence" value="ECO:0007669"/>
    <property type="project" value="InterPro"/>
</dbReference>
<dbReference type="GO" id="GO:0006412">
    <property type="term" value="P:translation"/>
    <property type="evidence" value="ECO:0007669"/>
    <property type="project" value="UniProtKB-UniRule"/>
</dbReference>
<dbReference type="Gene3D" id="2.30.170.40">
    <property type="entry name" value="Ribosomal protein L28/L24"/>
    <property type="match status" value="1"/>
</dbReference>
<dbReference type="HAMAP" id="MF_00373">
    <property type="entry name" value="Ribosomal_bL28"/>
    <property type="match status" value="1"/>
</dbReference>
<dbReference type="InterPro" id="IPR050096">
    <property type="entry name" value="Bacterial_rp_bL28"/>
</dbReference>
<dbReference type="InterPro" id="IPR026569">
    <property type="entry name" value="Ribosomal_bL28"/>
</dbReference>
<dbReference type="InterPro" id="IPR034704">
    <property type="entry name" value="Ribosomal_bL28/bL31-like_sf"/>
</dbReference>
<dbReference type="InterPro" id="IPR001383">
    <property type="entry name" value="Ribosomal_bL28_bact-type"/>
</dbReference>
<dbReference type="InterPro" id="IPR037147">
    <property type="entry name" value="Ribosomal_bL28_sf"/>
</dbReference>
<dbReference type="NCBIfam" id="TIGR00009">
    <property type="entry name" value="L28"/>
    <property type="match status" value="1"/>
</dbReference>
<dbReference type="PANTHER" id="PTHR39080">
    <property type="entry name" value="50S RIBOSOMAL PROTEIN L28"/>
    <property type="match status" value="1"/>
</dbReference>
<dbReference type="PANTHER" id="PTHR39080:SF1">
    <property type="entry name" value="LARGE RIBOSOMAL SUBUNIT PROTEIN BL28A"/>
    <property type="match status" value="1"/>
</dbReference>
<dbReference type="Pfam" id="PF00830">
    <property type="entry name" value="Ribosomal_L28"/>
    <property type="match status" value="1"/>
</dbReference>
<dbReference type="SUPFAM" id="SSF143800">
    <property type="entry name" value="L28p-like"/>
    <property type="match status" value="1"/>
</dbReference>
<gene>
    <name evidence="1" type="primary">rpmB</name>
    <name type="ordered locus">Oter_3785</name>
</gene>
<sequence>MARICAITGRRPVKGSIINRKGQSKKSGGIGTHVTTITKRKFRPNLQRIRVKLPNGGTKRMLVSVKALKAGLVEKA</sequence>
<organism>
    <name type="scientific">Opitutus terrae (strain DSM 11246 / JCM 15787 / PB90-1)</name>
    <dbReference type="NCBI Taxonomy" id="452637"/>
    <lineage>
        <taxon>Bacteria</taxon>
        <taxon>Pseudomonadati</taxon>
        <taxon>Verrucomicrobiota</taxon>
        <taxon>Opitutia</taxon>
        <taxon>Opitutales</taxon>
        <taxon>Opitutaceae</taxon>
        <taxon>Opitutus</taxon>
    </lineage>
</organism>
<comment type="similarity">
    <text evidence="1">Belongs to the bacterial ribosomal protein bL28 family.</text>
</comment>
<name>RL28_OPITP</name>
<evidence type="ECO:0000255" key="1">
    <source>
        <dbReference type="HAMAP-Rule" id="MF_00373"/>
    </source>
</evidence>
<evidence type="ECO:0000305" key="2"/>
<protein>
    <recommendedName>
        <fullName evidence="1">Large ribosomal subunit protein bL28</fullName>
    </recommendedName>
    <alternativeName>
        <fullName evidence="2">50S ribosomal protein L28</fullName>
    </alternativeName>
</protein>
<accession>B1ZYG2</accession>
<reference key="1">
    <citation type="journal article" date="2011" name="J. Bacteriol.">
        <title>Genome sequence of the verrucomicrobium Opitutus terrae PB90-1, an abundant inhabitant of rice paddy soil ecosystems.</title>
        <authorList>
            <person name="van Passel M.W."/>
            <person name="Kant R."/>
            <person name="Palva A."/>
            <person name="Copeland A."/>
            <person name="Lucas S."/>
            <person name="Lapidus A."/>
            <person name="Glavina del Rio T."/>
            <person name="Pitluck S."/>
            <person name="Goltsman E."/>
            <person name="Clum A."/>
            <person name="Sun H."/>
            <person name="Schmutz J."/>
            <person name="Larimer F.W."/>
            <person name="Land M.L."/>
            <person name="Hauser L."/>
            <person name="Kyrpides N."/>
            <person name="Mikhailova N."/>
            <person name="Richardson P.P."/>
            <person name="Janssen P.H."/>
            <person name="de Vos W.M."/>
            <person name="Smidt H."/>
        </authorList>
    </citation>
    <scope>NUCLEOTIDE SEQUENCE [LARGE SCALE GENOMIC DNA]</scope>
    <source>
        <strain>DSM 11246 / JCM 15787 / PB90-1</strain>
    </source>
</reference>
<proteinExistence type="inferred from homology"/>
<keyword id="KW-1185">Reference proteome</keyword>
<keyword id="KW-0687">Ribonucleoprotein</keyword>
<keyword id="KW-0689">Ribosomal protein</keyword>
<feature type="chain" id="PRO_1000121664" description="Large ribosomal subunit protein bL28">
    <location>
        <begin position="1"/>
        <end position="76"/>
    </location>
</feature>